<sequence length="358" mass="38871">MKNVAVLSGDGIGPEVMEIAISVLKKALGAKVSEFQFKEGFVGGIAIDKTGHPLPPETLKLCEESSAILFGSVGGPKWETLPPEKQPERGALLPLRKHFDLFANLRPAIIYPELKNASPVRSDIIGNGLDILILRELTGGIYFGQPKGREGSGQEEFAYDTMKYSRREIERIAKVAFQAARKRNNKVTSIDKANVLTTSVFWKEVVIELHKKEFSDVQLNHLYVDNAAMQLIVNPKQFDVVLCENMFGDILSDEASIITGSIGMLPSASLSESGFGLYEPSGGSAPDIAGKGVANPIAQVLSAALMLRYSFSMEEEANKIETAVRKTIASGKRTRDIAEVGSTIVGTKEIGQLIESFL</sequence>
<dbReference type="EC" id="1.1.1.85"/>
<dbReference type="EMBL" id="M59431">
    <property type="protein sequence ID" value="AAA72088.1"/>
    <property type="molecule type" value="Unassigned_DNA"/>
</dbReference>
<dbReference type="EMBL" id="AE010300">
    <property type="protein sequence ID" value="AAN49351.1"/>
    <property type="molecule type" value="Genomic_DNA"/>
</dbReference>
<dbReference type="RefSeq" id="NP_712333.1">
    <property type="nucleotide sequence ID" value="NC_004342.2"/>
</dbReference>
<dbReference type="RefSeq" id="WP_000799846.1">
    <property type="nucleotide sequence ID" value="NC_004342.2"/>
</dbReference>
<dbReference type="SMR" id="P24015"/>
<dbReference type="FunCoup" id="P24015">
    <property type="interactions" value="433"/>
</dbReference>
<dbReference type="STRING" id="189518.LA_2152"/>
<dbReference type="PaxDb" id="189518-LA_2152"/>
<dbReference type="EnsemblBacteria" id="AAN49351">
    <property type="protein sequence ID" value="AAN49351"/>
    <property type="gene ID" value="LA_2152"/>
</dbReference>
<dbReference type="GeneID" id="61141667"/>
<dbReference type="KEGG" id="lil:LA_2152"/>
<dbReference type="PATRIC" id="fig|189518.3.peg.2144"/>
<dbReference type="HOGENOM" id="CLU_031953_0_3_12"/>
<dbReference type="InParanoid" id="P24015"/>
<dbReference type="OrthoDB" id="9806254at2"/>
<dbReference type="BioCyc" id="MetaCyc:MONOMER-11898"/>
<dbReference type="BRENDA" id="1.1.1.85">
    <property type="organism ID" value="2986"/>
</dbReference>
<dbReference type="UniPathway" id="UPA00048">
    <property type="reaction ID" value="UER00072"/>
</dbReference>
<dbReference type="Proteomes" id="UP000001408">
    <property type="component" value="Chromosome I"/>
</dbReference>
<dbReference type="GO" id="GO:0005829">
    <property type="term" value="C:cytosol"/>
    <property type="evidence" value="ECO:0000318"/>
    <property type="project" value="GO_Central"/>
</dbReference>
<dbReference type="GO" id="GO:0003862">
    <property type="term" value="F:3-isopropylmalate dehydrogenase activity"/>
    <property type="evidence" value="ECO:0000318"/>
    <property type="project" value="GO_Central"/>
</dbReference>
<dbReference type="GO" id="GO:0000287">
    <property type="term" value="F:magnesium ion binding"/>
    <property type="evidence" value="ECO:0007669"/>
    <property type="project" value="InterPro"/>
</dbReference>
<dbReference type="GO" id="GO:0051287">
    <property type="term" value="F:NAD binding"/>
    <property type="evidence" value="ECO:0007669"/>
    <property type="project" value="InterPro"/>
</dbReference>
<dbReference type="GO" id="GO:0009098">
    <property type="term" value="P:L-leucine biosynthetic process"/>
    <property type="evidence" value="ECO:0000318"/>
    <property type="project" value="GO_Central"/>
</dbReference>
<dbReference type="FunFam" id="3.40.718.10:FF:000004">
    <property type="entry name" value="3-isopropylmalate dehydrogenase"/>
    <property type="match status" value="1"/>
</dbReference>
<dbReference type="Gene3D" id="3.40.718.10">
    <property type="entry name" value="Isopropylmalate Dehydrogenase"/>
    <property type="match status" value="1"/>
</dbReference>
<dbReference type="HAMAP" id="MF_01033">
    <property type="entry name" value="LeuB_type1"/>
    <property type="match status" value="1"/>
</dbReference>
<dbReference type="InterPro" id="IPR019818">
    <property type="entry name" value="IsoCit/isopropylmalate_DH_CS"/>
</dbReference>
<dbReference type="InterPro" id="IPR024084">
    <property type="entry name" value="IsoPropMal-DH-like_dom"/>
</dbReference>
<dbReference type="InterPro" id="IPR004429">
    <property type="entry name" value="Isopropylmalate_DH"/>
</dbReference>
<dbReference type="NCBIfam" id="TIGR00169">
    <property type="entry name" value="leuB"/>
    <property type="match status" value="1"/>
</dbReference>
<dbReference type="PANTHER" id="PTHR42979">
    <property type="entry name" value="3-ISOPROPYLMALATE DEHYDROGENASE"/>
    <property type="match status" value="1"/>
</dbReference>
<dbReference type="PANTHER" id="PTHR42979:SF1">
    <property type="entry name" value="3-ISOPROPYLMALATE DEHYDROGENASE"/>
    <property type="match status" value="1"/>
</dbReference>
<dbReference type="Pfam" id="PF00180">
    <property type="entry name" value="Iso_dh"/>
    <property type="match status" value="1"/>
</dbReference>
<dbReference type="SMART" id="SM01329">
    <property type="entry name" value="Iso_dh"/>
    <property type="match status" value="1"/>
</dbReference>
<dbReference type="SUPFAM" id="SSF53659">
    <property type="entry name" value="Isocitrate/Isopropylmalate dehydrogenase-like"/>
    <property type="match status" value="1"/>
</dbReference>
<dbReference type="PROSITE" id="PS00470">
    <property type="entry name" value="IDH_IMDH"/>
    <property type="match status" value="1"/>
</dbReference>
<name>LEU3_LEPIN</name>
<comment type="function">
    <text evidence="1">Catalyzes the oxidation of 3-carboxy-2-hydroxy-4-methylpentanoate (3-isopropylmalate) to 3-carboxy-4-methyl-2-oxopentanoate. The product decarboxylates to 4-methyl-2 oxopentanoate (By similarity).</text>
</comment>
<comment type="catalytic activity">
    <reaction>
        <text>(2R,3S)-3-isopropylmalate + NAD(+) = 4-methyl-2-oxopentanoate + CO2 + NADH</text>
        <dbReference type="Rhea" id="RHEA:32271"/>
        <dbReference type="ChEBI" id="CHEBI:16526"/>
        <dbReference type="ChEBI" id="CHEBI:17865"/>
        <dbReference type="ChEBI" id="CHEBI:35121"/>
        <dbReference type="ChEBI" id="CHEBI:57540"/>
        <dbReference type="ChEBI" id="CHEBI:57945"/>
        <dbReference type="EC" id="1.1.1.85"/>
    </reaction>
</comment>
<comment type="cofactor">
    <cofactor evidence="1">
        <name>Mg(2+)</name>
        <dbReference type="ChEBI" id="CHEBI:18420"/>
    </cofactor>
    <cofactor evidence="1">
        <name>Mn(2+)</name>
        <dbReference type="ChEBI" id="CHEBI:29035"/>
    </cofactor>
    <text evidence="1">Binds 1 Mg(2+) or Mn(2+) ion per subunit.</text>
</comment>
<comment type="pathway">
    <text>Amino-acid biosynthesis; L-leucine biosynthesis; L-leucine from 3-methyl-2-oxobutanoate: step 3/4.</text>
</comment>
<comment type="subunit">
    <text evidence="1">Homodimer.</text>
</comment>
<comment type="subcellular location">
    <subcellularLocation>
        <location evidence="1">Cytoplasm</location>
    </subcellularLocation>
</comment>
<comment type="similarity">
    <text evidence="2">Belongs to the isocitrate and isopropylmalate dehydrogenases family. LeuB type 1 subfamily.</text>
</comment>
<feature type="chain" id="PRO_0000083702" description="3-isopropylmalate dehydrogenase">
    <location>
        <begin position="1"/>
        <end position="358"/>
    </location>
</feature>
<feature type="binding site" evidence="1">
    <location>
        <begin position="75"/>
        <end position="88"/>
    </location>
    <ligand>
        <name>NAD(+)</name>
        <dbReference type="ChEBI" id="CHEBI:57540"/>
    </ligand>
</feature>
<feature type="binding site" evidence="1">
    <location>
        <position position="96"/>
    </location>
    <ligand>
        <name>substrate</name>
    </ligand>
</feature>
<feature type="binding site" evidence="1">
    <location>
        <position position="106"/>
    </location>
    <ligand>
        <name>substrate</name>
    </ligand>
</feature>
<feature type="binding site" evidence="1">
    <location>
        <position position="135"/>
    </location>
    <ligand>
        <name>substrate</name>
    </ligand>
</feature>
<feature type="binding site" evidence="1">
    <location>
        <position position="225"/>
    </location>
    <ligand>
        <name>Mg(2+)</name>
        <dbReference type="ChEBI" id="CHEBI:18420"/>
    </ligand>
</feature>
<feature type="binding site" evidence="1">
    <location>
        <position position="225"/>
    </location>
    <ligand>
        <name>substrate</name>
    </ligand>
</feature>
<feature type="binding site" evidence="1">
    <location>
        <position position="249"/>
    </location>
    <ligand>
        <name>Mg(2+)</name>
        <dbReference type="ChEBI" id="CHEBI:18420"/>
    </ligand>
</feature>
<feature type="binding site" evidence="1">
    <location>
        <position position="253"/>
    </location>
    <ligand>
        <name>Mg(2+)</name>
        <dbReference type="ChEBI" id="CHEBI:18420"/>
    </ligand>
</feature>
<feature type="binding site" evidence="1">
    <location>
        <begin position="283"/>
        <end position="295"/>
    </location>
    <ligand>
        <name>NAD(+)</name>
        <dbReference type="ChEBI" id="CHEBI:57540"/>
    </ligand>
</feature>
<feature type="site" description="Important for catalysis" evidence="1">
    <location>
        <position position="142"/>
    </location>
</feature>
<feature type="site" description="Important for catalysis" evidence="1">
    <location>
        <position position="192"/>
    </location>
</feature>
<proteinExistence type="inferred from homology"/>
<evidence type="ECO:0000250" key="1"/>
<evidence type="ECO:0000305" key="2"/>
<keyword id="KW-0028">Amino-acid biosynthesis</keyword>
<keyword id="KW-0100">Branched-chain amino acid biosynthesis</keyword>
<keyword id="KW-0963">Cytoplasm</keyword>
<keyword id="KW-0432">Leucine biosynthesis</keyword>
<keyword id="KW-0460">Magnesium</keyword>
<keyword id="KW-0464">Manganese</keyword>
<keyword id="KW-0479">Metal-binding</keyword>
<keyword id="KW-0520">NAD</keyword>
<keyword id="KW-0560">Oxidoreductase</keyword>
<keyword id="KW-1185">Reference proteome</keyword>
<reference key="1">
    <citation type="journal article" date="1993" name="J. Gen. Microbiol.">
        <title>Cloning and analysis of the leuB gene of Leptospira interrogans serovar pomona.</title>
        <authorList>
            <person name="Ding M."/>
            <person name="Yelton D.B."/>
        </authorList>
    </citation>
    <scope>NUCLEOTIDE SEQUENCE [GENOMIC DNA]</scope>
    <source>
        <strain>Kenniwicki / Serogroup Pomona / Serovar pomona</strain>
    </source>
</reference>
<reference key="2">
    <citation type="journal article" date="2003" name="Nature">
        <title>Unique physiological and pathogenic features of Leptospira interrogans revealed by whole-genome sequencing.</title>
        <authorList>
            <person name="Ren S.-X."/>
            <person name="Fu G."/>
            <person name="Jiang X.-G."/>
            <person name="Zeng R."/>
            <person name="Miao Y.-G."/>
            <person name="Xu H."/>
            <person name="Zhang Y.-X."/>
            <person name="Xiong H."/>
            <person name="Lu G."/>
            <person name="Lu L.-F."/>
            <person name="Jiang H.-Q."/>
            <person name="Jia J."/>
            <person name="Tu Y.-F."/>
            <person name="Jiang J.-X."/>
            <person name="Gu W.-Y."/>
            <person name="Zhang Y.-Q."/>
            <person name="Cai Z."/>
            <person name="Sheng H.-H."/>
            <person name="Yin H.-F."/>
            <person name="Zhang Y."/>
            <person name="Zhu G.-F."/>
            <person name="Wan M."/>
            <person name="Huang H.-L."/>
            <person name="Qian Z."/>
            <person name="Wang S.-Y."/>
            <person name="Ma W."/>
            <person name="Yao Z.-J."/>
            <person name="Shen Y."/>
            <person name="Qiang B.-Q."/>
            <person name="Xia Q.-C."/>
            <person name="Guo X.-K."/>
            <person name="Danchin A."/>
            <person name="Saint Girons I."/>
            <person name="Somerville R.L."/>
            <person name="Wen Y.-M."/>
            <person name="Shi M.-H."/>
            <person name="Chen Z."/>
            <person name="Xu J.-G."/>
            <person name="Zhao G.-P."/>
        </authorList>
    </citation>
    <scope>NUCLEOTIDE SEQUENCE [LARGE SCALE GENOMIC DNA]</scope>
    <source>
        <strain>56601</strain>
    </source>
</reference>
<protein>
    <recommendedName>
        <fullName>3-isopropylmalate dehydrogenase</fullName>
        <ecNumber>1.1.1.85</ecNumber>
    </recommendedName>
    <alternativeName>
        <fullName>3-IPM-DH</fullName>
    </alternativeName>
    <alternativeName>
        <fullName>Beta-IPM dehydrogenase</fullName>
        <shortName>IMDH</shortName>
    </alternativeName>
</protein>
<accession>P24015</accession>
<gene>
    <name type="primary">leuB</name>
    <name type="ordered locus">LA_2152</name>
</gene>
<organism>
    <name type="scientific">Leptospira interrogans serogroup Icterohaemorrhagiae serovar Lai (strain 56601)</name>
    <dbReference type="NCBI Taxonomy" id="189518"/>
    <lineage>
        <taxon>Bacteria</taxon>
        <taxon>Pseudomonadati</taxon>
        <taxon>Spirochaetota</taxon>
        <taxon>Spirochaetia</taxon>
        <taxon>Leptospirales</taxon>
        <taxon>Leptospiraceae</taxon>
        <taxon>Leptospira</taxon>
    </lineage>
</organism>